<sequence>MSVFDLPRLHFAGTATTRLPTGPRNGLVDLSTHSVVMDGERFPASRPAAEYHAYLDRVGGKGTAFAGNGYFAIDAGITAVERAAGEVDTGDLLVGRAVDVWGHYNEYLATTFNRARIFDVDPSSSWTSTVMIGQFGFGRLGRSHDVGYVFTGGVHGMQPPRWHEDGRVLHQFTVPAGEDMTWFGSAADSPAAARLRELVESGEADGLVVQLALSDAGPAPMPHAQQWRLRGTIAPWHAGEPRTCPAGRLLTPHNLTADLRGDHVSLNLISFRPPTGISGLELRTADTDRFIARVPADDPHGVVTVPAAEGGDEALCVVGTTAAGERIVVSREREVTVHVDDASVFLEHPRGPGDSDQDAEIAVRTYVRGEPAAATIHIGQYFNPRAFPLDEHATAASATPEDLDVVALCVDGTRWSRHCVISTDENGDGRFLLRGARPGATRLLLSAEGATPFDGLTAAAAYDNDDSLGLWSGLASVAVRVLPDHWWMDDIPRDKVTFDLLYREVFAFYELLYSFMGEEVFSLADRFRVETHPRLIWQMCDPRNRAKTYYMPPTRDLTGPQARLLLAYLRAQNSDVVVPVIEPSHTRSGTPISTRTDLVRALRHGVAIELAVMLQYLYAAFSIPTHGAGQELVSRGDWTPEQLRLMCGDGGETTDGGVRGSLLGVAREEMIHFLVVNNVLMAVGEPFHVPDLDFGTINDTLMVPLDFSLEALGLGSVQRFIQIEQPEGLTGAVRLGDLPVPVREAEDFHYASLSELYGDIREGLQRVPGLFLVERGRGGGEHHLFLRESVNAVHPDYQLEVDDLSSALFAIDFVTEQGEGHVLTDEDTGEESHYDTFVRVADLLMKERLTAADTRRAQWSPAYPVARNPTVHGGGQSKELVTSPVARELMVLFNKSYFMMLQLMVQHFGGSPDASLRRSKLMNAAIDVMTGVMRPLAELLVTVPSGRHGRTAGPSFELDEKPAFIPRADVARRAISLRFRHLAESARTCALVPDKVVRNLDFLADQFATEGPR</sequence>
<name>REBD_LENAE</name>
<feature type="chain" id="PRO_0000424087" description="Dichlorochromopyrrolate synthase">
    <location>
        <begin position="1"/>
        <end position="1013"/>
    </location>
</feature>
<organism>
    <name type="scientific">Lentzea aerocolonigenes</name>
    <name type="common">Lechevalieria aerocolonigenes</name>
    <name type="synonym">Saccharothrix aerocolonigenes</name>
    <dbReference type="NCBI Taxonomy" id="68170"/>
    <lineage>
        <taxon>Bacteria</taxon>
        <taxon>Bacillati</taxon>
        <taxon>Actinomycetota</taxon>
        <taxon>Actinomycetes</taxon>
        <taxon>Pseudonocardiales</taxon>
        <taxon>Pseudonocardiaceae</taxon>
        <taxon>Lentzea</taxon>
    </lineage>
</organism>
<evidence type="ECO:0000269" key="1">
    <source>
    </source>
</evidence>
<evidence type="ECO:0000269" key="2">
    <source>
    </source>
</evidence>
<evidence type="ECO:0000269" key="3">
    <source>
    </source>
</evidence>
<evidence type="ECO:0000305" key="4"/>
<gene>
    <name type="primary">rebD</name>
    <name type="synonym">rbmC</name>
</gene>
<protein>
    <recommendedName>
        <fullName>Dichlorochromopyrrolate synthase</fullName>
        <ecNumber evidence="2">1.21.98.2</ecNumber>
    </recommendedName>
    <alternativeName>
        <fullName>Catalase</fullName>
        <ecNumber evidence="2">1.11.1.6</ecNumber>
    </alternativeName>
</protein>
<keyword id="KW-0349">Heme</keyword>
<keyword id="KW-0408">Iron</keyword>
<keyword id="KW-0479">Metal-binding</keyword>
<keyword id="KW-0560">Oxidoreductase</keyword>
<proteinExistence type="evidence at protein level"/>
<accession>Q8KHV6</accession>
<reference key="1">
    <citation type="journal article" date="2002" name="Chem. Biol.">
        <title>The biosynthetic gene cluster for the antitumor rebeccamycin: characterization and generation of indolocarbazole derivatives.</title>
        <authorList>
            <person name="Sanchez C."/>
            <person name="Butovich I.A."/>
            <person name="Brana A.F."/>
            <person name="Rohr J."/>
            <person name="Mendez C."/>
            <person name="Salas J.A."/>
        </authorList>
    </citation>
    <scope>NUCLEOTIDE SEQUENCE [GENOMIC DNA]</scope>
    <source>
        <strain>ATCC 39243 / DSM 44217 / BCRC 13729 / KCTC 9384</strain>
    </source>
</reference>
<reference key="2">
    <citation type="journal article" date="2002" name="J. Antibiot.">
        <title>Cloning of the staurosporine biosynthetic gene cluster from Streptomyces sp. TP-A0274 and its heterologous expression in Streptomyces lividans.</title>
        <authorList>
            <person name="Onaka H."/>
            <person name="Taniguchi S."/>
            <person name="Igarashi Y."/>
            <person name="Furumai T."/>
        </authorList>
    </citation>
    <scope>NUCLEOTIDE SEQUENCE [GENOMIC DNA]</scope>
</reference>
<reference key="3">
    <citation type="submission" date="2002-08" db="EMBL/GenBank/DDBJ databases">
        <title>The biosynthesis of indolocarbazoles in a heterologous E. coli host.</title>
        <authorList>
            <person name="Hyun C.-G."/>
            <person name="Bililign T."/>
            <person name="Liao J."/>
            <person name="Thorson J.S."/>
        </authorList>
    </citation>
    <scope>NUCLEOTIDE SEQUENCE [GENOMIC DNA]</scope>
</reference>
<reference key="4">
    <citation type="journal article" date="2003" name="Biosci. Biotechnol. Biochem.">
        <title>Characterization of the biosynthetic gene cluster of rebeccamycin from Lechevalieria aerocolonigenes ATCC 39243.</title>
        <authorList>
            <person name="Onaka H."/>
            <person name="Taniguchi S."/>
            <person name="Igarashi Y."/>
            <person name="Furumai T."/>
        </authorList>
    </citation>
    <scope>NUCLEOTIDE SEQUENCE [GENOMIC DNA]</scope>
    <scope>FUNCTION IN THE REBECCAMYCIN BIOSYNTHESIS</scope>
    <source>
        <strain>ATCC 39243 / DSM 44217 / BCRC 13729 / KCTC 9384</strain>
    </source>
</reference>
<reference key="5">
    <citation type="journal article" date="2003" name="J. Antibiot.">
        <title>pTOYAMAcos, pTYM18, and pTYM19, actinomycete-Escherichia coli integrating vectors for heterologous gene expression.</title>
        <authorList>
            <person name="Onaka H."/>
            <person name="Taniguchi S."/>
            <person name="Ikeda H."/>
            <person name="Igarashi Y."/>
            <person name="Furumai T."/>
        </authorList>
    </citation>
    <scope>NUCLEOTIDE SEQUENCE [GENOMIC DNA]</scope>
</reference>
<reference key="6">
    <citation type="journal article" date="2005" name="J. Bacteriol.">
        <title>Molecular analysis of the rebeccamycin L-amino acid oxidase from Lechevalieria aerocolonigenes ATCC 39243.</title>
        <authorList>
            <person name="Nishizawa T."/>
            <person name="Aldrich C.C."/>
            <person name="Sherman D.H."/>
        </authorList>
    </citation>
    <scope>NUCLEOTIDE SEQUENCE [GENOMIC DNA]</scope>
</reference>
<reference key="7">
    <citation type="journal article" date="2006" name="Nihon Hosenkin Gakkaishi">
        <title>Biosynthesis of heterocyclic antibiotics in actinomycetes and an approach to synthesize the natural compounds.</title>
        <authorList>
            <person name="Onaka H."/>
        </authorList>
    </citation>
    <scope>NUCLEOTIDE SEQUENCE [GENOMIC DNA]</scope>
</reference>
<reference key="8">
    <citation type="journal article" date="2006" name="Tetrahedron Lett.">
        <title>Direct formation of chromopyrrolic acid from indole-3-pyruvic acid by StaD, a novel hemoprotein in indolocarbazole biosynthesis.</title>
        <authorList>
            <person name="Asamizu S."/>
            <person name="Kato Y."/>
            <person name="Igarashi Y."/>
            <person name="Furumai T."/>
            <person name="Onaka H."/>
        </authorList>
    </citation>
    <scope>NUCLEOTIDE SEQUENCE [GENOMIC DNA]</scope>
</reference>
<reference key="9">
    <citation type="journal article" date="2005" name="Biochemistry">
        <title>Enzymatic generation of the chromopyrrolic acid scaffold of rebeccamycin by the tandem action of RebO and RebD.</title>
        <authorList>
            <person name="Howard-Jones A.R."/>
            <person name="Walsh C.T."/>
        </authorList>
    </citation>
    <scope>FUNCTION</scope>
    <scope>CATALYTIC ACTIVITY</scope>
    <scope>BIOPHYSICOCHEMICAL PROPERTIES</scope>
    <scope>COFACTOR</scope>
    <scope>SUBUNIT</scope>
    <scope>IDENTIFICATION BY MASS SPECTROMETRY</scope>
    <source>
        <strain>ATCC 39243 / DSM 44217 / BCRC 13729 / KCTC 9384</strain>
    </source>
</reference>
<reference key="10">
    <citation type="journal article" date="2015" name="Arch. Biochem. Biophys.">
        <title>Evidence for catalytic intermediates involved in generating the chromopyrrolic acid scaffold of rebeccamycin by RebO and RebD.</title>
        <authorList>
            <person name="Spolitak T."/>
            <person name="Ballou D.P."/>
        </authorList>
    </citation>
    <scope>FUNCTION</scope>
    <scope>CATALYTIC ACTIVITY</scope>
    <source>
        <strain>ATCC 39243 / DSM 44217 / BCRC 13729 / KCTC 9384</strain>
    </source>
</reference>
<comment type="function">
    <text evidence="1 2 3">Involved in the biosynthesis of the indolocarbazole antitumor agent rebeccamycin. Catalyzes the hydrogen peroxide-dependent dimerization of two L-tryptophan-derived molecules (imine form of indole 3-pyruvate (IPA)), to form dichlorochromopyrrolic acid (CPA), the precursor for the six-ring bisindolopyrrolocarbazole scaffold of the rebeccamycin. The hydrogen peroxide is provided together with iminoindolpropanoate by RebO. Due to the instability of indole 3-pyruvate (IPA), which is hydrolyzed in solution and exits in equilibrium with the predominant ketone form of IPA, the concerted functioning of the RebO/RebD system appears to prevent the buildup of significant amounts of IPA and its imine in solution, effectively shepherding the imine further down the biosynthetic chain.</text>
</comment>
<comment type="catalytic activity">
    <reaction evidence="2 3">
        <text>2 3-(7-chloroindol-3-yl)-2-iminopropanoate + H2O2 = dichlorochromopyrrolate + NH4(+) + 2 H2O + H(+)</text>
        <dbReference type="Rhea" id="RHEA:27393"/>
        <dbReference type="ChEBI" id="CHEBI:15377"/>
        <dbReference type="ChEBI" id="CHEBI:15378"/>
        <dbReference type="ChEBI" id="CHEBI:16240"/>
        <dbReference type="ChEBI" id="CHEBI:28938"/>
        <dbReference type="ChEBI" id="CHEBI:59194"/>
        <dbReference type="ChEBI" id="CHEBI:59198"/>
        <dbReference type="EC" id="1.21.98.2"/>
    </reaction>
</comment>
<comment type="catalytic activity">
    <reaction evidence="3">
        <text>2 2-iminio-3-(indol-3-yl)propanoate + H2O2 = chromopyrrolate + NH4(+) + 2 H2O + H(+)</text>
        <dbReference type="Rhea" id="RHEA:50920"/>
        <dbReference type="ChEBI" id="CHEBI:15377"/>
        <dbReference type="ChEBI" id="CHEBI:15378"/>
        <dbReference type="ChEBI" id="CHEBI:16240"/>
        <dbReference type="ChEBI" id="CHEBI:28938"/>
        <dbReference type="ChEBI" id="CHEBI:59193"/>
        <dbReference type="ChEBI" id="CHEBI:133898"/>
        <dbReference type="EC" id="1.21.98.2"/>
    </reaction>
</comment>
<comment type="catalytic activity">
    <reaction evidence="2">
        <text>2 H2O2 = O2 + 2 H2O</text>
        <dbReference type="Rhea" id="RHEA:20309"/>
        <dbReference type="ChEBI" id="CHEBI:15377"/>
        <dbReference type="ChEBI" id="CHEBI:15379"/>
        <dbReference type="ChEBI" id="CHEBI:16240"/>
        <dbReference type="EC" id="1.11.1.6"/>
    </reaction>
</comment>
<comment type="cofactor">
    <cofactor evidence="2">
        <name>heme</name>
        <dbReference type="ChEBI" id="CHEBI:30413"/>
    </cofactor>
</comment>
<comment type="biophysicochemical properties">
    <kinetics>
        <KM evidence="2">150 mM for 2-imino-3-(indol-3-yl)propanoate (at pH 7.5)</KM>
        <text>kcat is 64000 min(-1) for 2-imino-3-(indol-3-yl)propanoate (at pH 7.5).</text>
    </kinetics>
</comment>
<comment type="subunit">
    <text evidence="2">Homodimer.</text>
</comment>
<comment type="similarity">
    <text evidence="4">Belongs to the RebD family.</text>
</comment>
<dbReference type="EC" id="1.21.98.2" evidence="2"/>
<dbReference type="EC" id="1.11.1.6" evidence="2"/>
<dbReference type="EMBL" id="AF534707">
    <property type="protein sequence ID" value="AAN01209.1"/>
    <property type="molecule type" value="Genomic_DNA"/>
</dbReference>
<dbReference type="EMBL" id="AB090952">
    <property type="protein sequence ID" value="BAC10675.1"/>
    <property type="molecule type" value="Genomic_DNA"/>
</dbReference>
<dbReference type="EMBL" id="AB071405">
    <property type="protein sequence ID" value="BAC15751.1"/>
    <property type="molecule type" value="Genomic_DNA"/>
</dbReference>
<dbReference type="EMBL" id="AJ414559">
    <property type="protein sequence ID" value="CAC93715.1"/>
    <property type="molecule type" value="Genomic_DNA"/>
</dbReference>
<dbReference type="SMR" id="Q8KHV6"/>
<dbReference type="KEGG" id="ag:BAC10675"/>
<dbReference type="BioCyc" id="MetaCyc:MONOMER-15087"/>
<dbReference type="BRENDA" id="1.21.98.2">
    <property type="organism ID" value="4340"/>
</dbReference>
<dbReference type="GO" id="GO:0004096">
    <property type="term" value="F:catalase activity"/>
    <property type="evidence" value="ECO:0007669"/>
    <property type="project" value="UniProtKB-EC"/>
</dbReference>
<dbReference type="GO" id="GO:0020037">
    <property type="term" value="F:heme binding"/>
    <property type="evidence" value="ECO:0000314"/>
    <property type="project" value="UniProtKB"/>
</dbReference>
<dbReference type="GO" id="GO:0046872">
    <property type="term" value="F:metal ion binding"/>
    <property type="evidence" value="ECO:0007669"/>
    <property type="project" value="UniProtKB-KW"/>
</dbReference>
<dbReference type="GO" id="GO:0046993">
    <property type="term" value="F:oxidoreductase activity, acting on X-H and Y-H to form an X-Y bond, with oxygen as acceptor"/>
    <property type="evidence" value="ECO:0000314"/>
    <property type="project" value="UniProtKB"/>
</dbReference>
<dbReference type="Gene3D" id="1.20.1260.10">
    <property type="match status" value="1"/>
</dbReference>
<dbReference type="InterPro" id="IPR012347">
    <property type="entry name" value="Ferritin-like"/>
</dbReference>
<dbReference type="InterPro" id="IPR026820">
    <property type="entry name" value="VioB/RebD_dom"/>
</dbReference>
<dbReference type="Pfam" id="PF12902">
    <property type="entry name" value="Ferritin-like"/>
    <property type="match status" value="1"/>
</dbReference>